<feature type="transit peptide" description="Chloroplast" evidence="6">
    <location>
        <begin position="1"/>
        <end position="49"/>
    </location>
</feature>
<feature type="chain" id="PRO_0000307176" description="Diaminopimelate decarboxylase 1, chloroplastic">
    <location>
        <begin position="50"/>
        <end position="484"/>
    </location>
</feature>
<feature type="region of interest" description="Disordered" evidence="3">
    <location>
        <begin position="1"/>
        <end position="30"/>
    </location>
</feature>
<feature type="compositionally biased region" description="Polar residues" evidence="3">
    <location>
        <begin position="1"/>
        <end position="28"/>
    </location>
</feature>
<feature type="active site" description="Proton donor" evidence="2">
    <location>
        <position position="411"/>
    </location>
</feature>
<feature type="binding site" evidence="1">
    <location>
        <position position="304"/>
    </location>
    <ligand>
        <name>pyridoxal 5'-phosphate</name>
        <dbReference type="ChEBI" id="CHEBI:597326"/>
    </ligand>
</feature>
<feature type="binding site" evidence="1">
    <location>
        <begin position="340"/>
        <end position="343"/>
    </location>
    <ligand>
        <name>pyridoxal 5'-phosphate</name>
        <dbReference type="ChEBI" id="CHEBI:597326"/>
    </ligand>
</feature>
<feature type="binding site" evidence="1">
    <location>
        <position position="343"/>
    </location>
    <ligand>
        <name>substrate</name>
    </ligand>
</feature>
<feature type="binding site" evidence="1">
    <location>
        <position position="379"/>
    </location>
    <ligand>
        <name>substrate</name>
    </ligand>
</feature>
<feature type="binding site" evidence="1">
    <location>
        <position position="383"/>
    </location>
    <ligand>
        <name>substrate</name>
    </ligand>
</feature>
<feature type="binding site" evidence="1">
    <location>
        <position position="412"/>
    </location>
    <ligand>
        <name>substrate</name>
    </ligand>
</feature>
<feature type="binding site" evidence="1">
    <location>
        <position position="440"/>
    </location>
    <ligand>
        <name>pyridoxal 5'-phosphate</name>
        <dbReference type="ChEBI" id="CHEBI:597326"/>
    </ligand>
</feature>
<feature type="binding site" evidence="1">
    <location>
        <position position="440"/>
    </location>
    <ligand>
        <name>substrate</name>
    </ligand>
</feature>
<feature type="modified residue" description="N-acetylalanine" evidence="6">
    <location>
        <position position="50"/>
    </location>
</feature>
<feature type="modified residue" description="N6-(pyridoxal phosphate)lysine" evidence="1">
    <location>
        <position position="125"/>
    </location>
</feature>
<feature type="strand" evidence="7">
    <location>
        <begin position="66"/>
        <end position="69"/>
    </location>
</feature>
<feature type="strand" evidence="7">
    <location>
        <begin position="75"/>
        <end position="77"/>
    </location>
</feature>
<feature type="helix" evidence="7">
    <location>
        <begin position="82"/>
        <end position="88"/>
    </location>
</feature>
<feature type="strand" evidence="7">
    <location>
        <begin position="94"/>
        <end position="98"/>
    </location>
</feature>
<feature type="helix" evidence="7">
    <location>
        <begin position="99"/>
        <end position="112"/>
    </location>
</feature>
<feature type="turn" evidence="7">
    <location>
        <begin position="113"/>
        <end position="115"/>
    </location>
</feature>
<feature type="strand" evidence="7">
    <location>
        <begin position="118"/>
        <end position="123"/>
    </location>
</feature>
<feature type="helix" evidence="7">
    <location>
        <begin position="124"/>
        <end position="126"/>
    </location>
</feature>
<feature type="helix" evidence="7">
    <location>
        <begin position="130"/>
        <end position="138"/>
    </location>
</feature>
<feature type="strand" evidence="7">
    <location>
        <begin position="142"/>
        <end position="147"/>
    </location>
</feature>
<feature type="helix" evidence="7">
    <location>
        <begin position="148"/>
        <end position="156"/>
    </location>
</feature>
<feature type="helix" evidence="7">
    <location>
        <begin position="161"/>
        <end position="163"/>
    </location>
</feature>
<feature type="strand" evidence="7">
    <location>
        <begin position="164"/>
        <end position="166"/>
    </location>
</feature>
<feature type="helix" evidence="7">
    <location>
        <begin position="173"/>
        <end position="182"/>
    </location>
</feature>
<feature type="strand" evidence="7">
    <location>
        <begin position="185"/>
        <end position="188"/>
    </location>
</feature>
<feature type="helix" evidence="7">
    <location>
        <begin position="191"/>
        <end position="204"/>
    </location>
</feature>
<feature type="strand" evidence="7">
    <location>
        <begin position="208"/>
        <end position="215"/>
    </location>
</feature>
<feature type="turn" evidence="7">
    <location>
        <begin position="220"/>
        <end position="222"/>
    </location>
</feature>
<feature type="helix" evidence="7">
    <location>
        <begin position="224"/>
        <end position="232"/>
    </location>
</feature>
<feature type="strand" evidence="7">
    <location>
        <begin position="234"/>
        <end position="238"/>
    </location>
</feature>
<feature type="helix" evidence="7">
    <location>
        <begin position="239"/>
        <end position="241"/>
    </location>
</feature>
<feature type="helix" evidence="7">
    <location>
        <begin position="242"/>
        <end position="251"/>
    </location>
</feature>
<feature type="turn" evidence="7">
    <location>
        <begin position="253"/>
        <end position="255"/>
    </location>
</feature>
<feature type="strand" evidence="7">
    <location>
        <begin position="256"/>
        <end position="262"/>
    </location>
</feature>
<feature type="strand" evidence="7">
    <location>
        <begin position="267"/>
        <end position="269"/>
    </location>
</feature>
<feature type="helix" evidence="7">
    <location>
        <begin position="273"/>
        <end position="291"/>
    </location>
</feature>
<feature type="strand" evidence="7">
    <location>
        <begin position="298"/>
        <end position="300"/>
    </location>
</feature>
<feature type="helix" evidence="7">
    <location>
        <begin position="319"/>
        <end position="324"/>
    </location>
</feature>
<feature type="helix" evidence="7">
    <location>
        <begin position="327"/>
        <end position="333"/>
    </location>
</feature>
<feature type="strand" evidence="7">
    <location>
        <begin position="336"/>
        <end position="339"/>
    </location>
</feature>
<feature type="helix" evidence="7">
    <location>
        <begin position="343"/>
        <end position="346"/>
    </location>
</feature>
<feature type="helix" evidence="7">
    <location>
        <begin position="347"/>
        <end position="349"/>
    </location>
</feature>
<feature type="strand" evidence="7">
    <location>
        <begin position="350"/>
        <end position="361"/>
    </location>
</feature>
<feature type="strand" evidence="7">
    <location>
        <begin position="366"/>
        <end position="371"/>
    </location>
</feature>
<feature type="turn" evidence="7">
    <location>
        <begin position="374"/>
        <end position="376"/>
    </location>
</feature>
<feature type="helix" evidence="7">
    <location>
        <begin position="379"/>
        <end position="383"/>
    </location>
</feature>
<feature type="strand" evidence="7">
    <location>
        <begin position="389"/>
        <end position="393"/>
    </location>
</feature>
<feature type="strand" evidence="7">
    <location>
        <begin position="401"/>
        <end position="407"/>
    </location>
</feature>
<feature type="strand" evidence="7">
    <location>
        <begin position="409"/>
        <end position="412"/>
    </location>
</feature>
<feature type="strand" evidence="7">
    <location>
        <begin position="416"/>
        <end position="424"/>
    </location>
</feature>
<feature type="strand" evidence="7">
    <location>
        <begin position="431"/>
        <end position="436"/>
    </location>
</feature>
<feature type="strand" evidence="7">
    <location>
        <begin position="438"/>
        <end position="441"/>
    </location>
</feature>
<feature type="helix" evidence="7">
    <location>
        <begin position="442"/>
        <end position="444"/>
    </location>
</feature>
<feature type="helix" evidence="7">
    <location>
        <begin position="448"/>
        <end position="450"/>
    </location>
</feature>
<feature type="strand" evidence="7">
    <location>
        <begin position="456"/>
        <end position="459"/>
    </location>
</feature>
<feature type="strand" evidence="7">
    <location>
        <begin position="465"/>
        <end position="469"/>
    </location>
</feature>
<feature type="helix" evidence="7">
    <location>
        <begin position="474"/>
        <end position="478"/>
    </location>
</feature>
<feature type="helix" evidence="7">
    <location>
        <begin position="479"/>
        <end position="481"/>
    </location>
</feature>
<accession>Q949X7</accession>
<accession>Q9LUL0</accession>
<organism>
    <name type="scientific">Arabidopsis thaliana</name>
    <name type="common">Mouse-ear cress</name>
    <dbReference type="NCBI Taxonomy" id="3702"/>
    <lineage>
        <taxon>Eukaryota</taxon>
        <taxon>Viridiplantae</taxon>
        <taxon>Streptophyta</taxon>
        <taxon>Embryophyta</taxon>
        <taxon>Tracheophyta</taxon>
        <taxon>Spermatophyta</taxon>
        <taxon>Magnoliopsida</taxon>
        <taxon>eudicotyledons</taxon>
        <taxon>Gunneridae</taxon>
        <taxon>Pentapetalae</taxon>
        <taxon>rosids</taxon>
        <taxon>malvids</taxon>
        <taxon>Brassicales</taxon>
        <taxon>Brassicaceae</taxon>
        <taxon>Camelineae</taxon>
        <taxon>Arabidopsis</taxon>
    </lineage>
</organism>
<protein>
    <recommendedName>
        <fullName>Diaminopimelate decarboxylase 1, chloroplastic</fullName>
        <shortName>DAP decarboxylase 1</shortName>
        <shortName>DAPDC 1</shortName>
        <ecNumber>4.1.1.20</ecNumber>
    </recommendedName>
</protein>
<dbReference type="EC" id="4.1.1.20"/>
<dbReference type="EMBL" id="AB022220">
    <property type="protein sequence ID" value="BAB01044.1"/>
    <property type="status" value="ALT_INIT"/>
    <property type="molecule type" value="Genomic_DNA"/>
</dbReference>
<dbReference type="EMBL" id="CP002686">
    <property type="protein sequence ID" value="AEE75511.1"/>
    <property type="molecule type" value="Genomic_DNA"/>
</dbReference>
<dbReference type="EMBL" id="AY050823">
    <property type="protein sequence ID" value="AAK92758.1"/>
    <property type="molecule type" value="mRNA"/>
</dbReference>
<dbReference type="EMBL" id="AF227913">
    <property type="protein sequence ID" value="AAL55653.1"/>
    <property type="molecule type" value="mRNA"/>
</dbReference>
<dbReference type="EMBL" id="AY122998">
    <property type="protein sequence ID" value="AAM67531.1"/>
    <property type="molecule type" value="mRNA"/>
</dbReference>
<dbReference type="EMBL" id="AY088418">
    <property type="protein sequence ID" value="AAM65955.1"/>
    <property type="molecule type" value="mRNA"/>
</dbReference>
<dbReference type="RefSeq" id="NP_188056.1">
    <property type="nucleotide sequence ID" value="NM_112297.3"/>
</dbReference>
<dbReference type="PDB" id="6N2A">
    <property type="method" value="X-ray"/>
    <property type="resolution" value="1.88 A"/>
    <property type="chains" value="A/B=63-484"/>
</dbReference>
<dbReference type="PDBsum" id="6N2A"/>
<dbReference type="SMR" id="Q949X7"/>
<dbReference type="BioGRID" id="5994">
    <property type="interactions" value="5"/>
</dbReference>
<dbReference type="FunCoup" id="Q949X7">
    <property type="interactions" value="1116"/>
</dbReference>
<dbReference type="IntAct" id="Q949X7">
    <property type="interactions" value="1"/>
</dbReference>
<dbReference type="STRING" id="3702.Q949X7"/>
<dbReference type="GlyGen" id="Q949X7">
    <property type="glycosylation" value="1 site"/>
</dbReference>
<dbReference type="iPTMnet" id="Q949X7"/>
<dbReference type="PaxDb" id="3702-AT3G14390.1"/>
<dbReference type="ProteomicsDB" id="224170"/>
<dbReference type="EnsemblPlants" id="AT3G14390.1">
    <property type="protein sequence ID" value="AT3G14390.1"/>
    <property type="gene ID" value="AT3G14390"/>
</dbReference>
<dbReference type="GeneID" id="820660"/>
<dbReference type="Gramene" id="AT3G14390.1">
    <property type="protein sequence ID" value="AT3G14390.1"/>
    <property type="gene ID" value="AT3G14390"/>
</dbReference>
<dbReference type="KEGG" id="ath:AT3G14390"/>
<dbReference type="Araport" id="AT3G14390"/>
<dbReference type="TAIR" id="AT3G14390">
    <property type="gene designation" value="DAPDC1"/>
</dbReference>
<dbReference type="eggNOG" id="KOG0622">
    <property type="taxonomic scope" value="Eukaryota"/>
</dbReference>
<dbReference type="HOGENOM" id="CLU_026444_0_0_1"/>
<dbReference type="InParanoid" id="Q949X7"/>
<dbReference type="OMA" id="HGNAKSP"/>
<dbReference type="OrthoDB" id="5034579at2759"/>
<dbReference type="PhylomeDB" id="Q949X7"/>
<dbReference type="BioCyc" id="ARA:AT3G14390-MONOMER"/>
<dbReference type="BioCyc" id="MetaCyc:AT3G14390-MONOMER"/>
<dbReference type="BRENDA" id="4.1.1.20">
    <property type="organism ID" value="399"/>
</dbReference>
<dbReference type="UniPathway" id="UPA00034">
    <property type="reaction ID" value="UER00027"/>
</dbReference>
<dbReference type="CD-CODE" id="4299E36E">
    <property type="entry name" value="Nucleolus"/>
</dbReference>
<dbReference type="PRO" id="PR:Q949X7"/>
<dbReference type="Proteomes" id="UP000006548">
    <property type="component" value="Chromosome 3"/>
</dbReference>
<dbReference type="ExpressionAtlas" id="Q949X7">
    <property type="expression patterns" value="baseline and differential"/>
</dbReference>
<dbReference type="GO" id="GO:0009507">
    <property type="term" value="C:chloroplast"/>
    <property type="evidence" value="ECO:0007005"/>
    <property type="project" value="TAIR"/>
</dbReference>
<dbReference type="GO" id="GO:0009570">
    <property type="term" value="C:chloroplast stroma"/>
    <property type="evidence" value="ECO:0007005"/>
    <property type="project" value="TAIR"/>
</dbReference>
<dbReference type="GO" id="GO:0005829">
    <property type="term" value="C:cytosol"/>
    <property type="evidence" value="ECO:0007005"/>
    <property type="project" value="TAIR"/>
</dbReference>
<dbReference type="GO" id="GO:0008836">
    <property type="term" value="F:diaminopimelate decarboxylase activity"/>
    <property type="evidence" value="ECO:0007669"/>
    <property type="project" value="UniProtKB-EC"/>
</dbReference>
<dbReference type="GO" id="GO:0009089">
    <property type="term" value="P:lysine biosynthetic process via diaminopimelate"/>
    <property type="evidence" value="ECO:0007669"/>
    <property type="project" value="UniProtKB-UniPathway"/>
</dbReference>
<dbReference type="CDD" id="cd06828">
    <property type="entry name" value="PLPDE_III_DapDC"/>
    <property type="match status" value="1"/>
</dbReference>
<dbReference type="FunFam" id="2.40.37.10:FF:000003">
    <property type="entry name" value="Diaminopimelate decarboxylase"/>
    <property type="match status" value="1"/>
</dbReference>
<dbReference type="FunFam" id="3.20.20.10:FF:000003">
    <property type="entry name" value="Diaminopimelate decarboxylase"/>
    <property type="match status" value="1"/>
</dbReference>
<dbReference type="Gene3D" id="3.20.20.10">
    <property type="entry name" value="Alanine racemase"/>
    <property type="match status" value="1"/>
</dbReference>
<dbReference type="Gene3D" id="2.40.37.10">
    <property type="entry name" value="Lyase, Ornithine Decarboxylase, Chain A, domain 1"/>
    <property type="match status" value="1"/>
</dbReference>
<dbReference type="HAMAP" id="MF_02120">
    <property type="entry name" value="LysA"/>
    <property type="match status" value="1"/>
</dbReference>
<dbReference type="InterPro" id="IPR009006">
    <property type="entry name" value="Ala_racemase/Decarboxylase_C"/>
</dbReference>
<dbReference type="InterPro" id="IPR002986">
    <property type="entry name" value="DAP_deCOOHase_LysA"/>
</dbReference>
<dbReference type="InterPro" id="IPR022643">
    <property type="entry name" value="De-COase2_C"/>
</dbReference>
<dbReference type="InterPro" id="IPR022657">
    <property type="entry name" value="De-COase2_CS"/>
</dbReference>
<dbReference type="InterPro" id="IPR022644">
    <property type="entry name" value="De-COase2_N"/>
</dbReference>
<dbReference type="InterPro" id="IPR022653">
    <property type="entry name" value="De-COase2_pyr-phos_BS"/>
</dbReference>
<dbReference type="InterPro" id="IPR000183">
    <property type="entry name" value="Orn/DAP/Arg_de-COase"/>
</dbReference>
<dbReference type="InterPro" id="IPR029066">
    <property type="entry name" value="PLP-binding_barrel"/>
</dbReference>
<dbReference type="NCBIfam" id="TIGR01048">
    <property type="entry name" value="lysA"/>
    <property type="match status" value="1"/>
</dbReference>
<dbReference type="PANTHER" id="PTHR43727">
    <property type="entry name" value="DIAMINOPIMELATE DECARBOXYLASE"/>
    <property type="match status" value="1"/>
</dbReference>
<dbReference type="PANTHER" id="PTHR43727:SF2">
    <property type="entry name" value="GROUP IV DECARBOXYLASE"/>
    <property type="match status" value="1"/>
</dbReference>
<dbReference type="Pfam" id="PF02784">
    <property type="entry name" value="Orn_Arg_deC_N"/>
    <property type="match status" value="1"/>
</dbReference>
<dbReference type="Pfam" id="PF00278">
    <property type="entry name" value="Orn_DAP_Arg_deC"/>
    <property type="match status" value="1"/>
</dbReference>
<dbReference type="PRINTS" id="PR01181">
    <property type="entry name" value="DAPDCRBXLASE"/>
</dbReference>
<dbReference type="PRINTS" id="PR01179">
    <property type="entry name" value="ODADCRBXLASE"/>
</dbReference>
<dbReference type="SUPFAM" id="SSF50621">
    <property type="entry name" value="Alanine racemase C-terminal domain-like"/>
    <property type="match status" value="1"/>
</dbReference>
<dbReference type="SUPFAM" id="SSF51419">
    <property type="entry name" value="PLP-binding barrel"/>
    <property type="match status" value="1"/>
</dbReference>
<dbReference type="PROSITE" id="PS00878">
    <property type="entry name" value="ODR_DC_2_1"/>
    <property type="match status" value="1"/>
</dbReference>
<dbReference type="PROSITE" id="PS00879">
    <property type="entry name" value="ODR_DC_2_2"/>
    <property type="match status" value="1"/>
</dbReference>
<reference key="1">
    <citation type="journal article" date="2000" name="DNA Res.">
        <title>Structural analysis of Arabidopsis thaliana chromosome 3. I. Sequence features of the regions of 4,504,864 bp covered by sixty P1 and TAC clones.</title>
        <authorList>
            <person name="Sato S."/>
            <person name="Nakamura Y."/>
            <person name="Kaneko T."/>
            <person name="Katoh T."/>
            <person name="Asamizu E."/>
            <person name="Tabata S."/>
        </authorList>
    </citation>
    <scope>NUCLEOTIDE SEQUENCE [LARGE SCALE GENOMIC DNA]</scope>
    <source>
        <strain>cv. Columbia</strain>
    </source>
</reference>
<reference key="2">
    <citation type="journal article" date="2017" name="Plant J.">
        <title>Araport11: a complete reannotation of the Arabidopsis thaliana reference genome.</title>
        <authorList>
            <person name="Cheng C.Y."/>
            <person name="Krishnakumar V."/>
            <person name="Chan A.P."/>
            <person name="Thibaud-Nissen F."/>
            <person name="Schobel S."/>
            <person name="Town C.D."/>
        </authorList>
    </citation>
    <scope>GENOME REANNOTATION</scope>
    <source>
        <strain>cv. Columbia</strain>
    </source>
</reference>
<reference key="3">
    <citation type="journal article" date="2003" name="Science">
        <title>Empirical analysis of transcriptional activity in the Arabidopsis genome.</title>
        <authorList>
            <person name="Yamada K."/>
            <person name="Lim J."/>
            <person name="Dale J.M."/>
            <person name="Chen H."/>
            <person name="Shinn P."/>
            <person name="Palm C.J."/>
            <person name="Southwick A.M."/>
            <person name="Wu H.C."/>
            <person name="Kim C.J."/>
            <person name="Nguyen M."/>
            <person name="Pham P.K."/>
            <person name="Cheuk R.F."/>
            <person name="Karlin-Newmann G."/>
            <person name="Liu S.X."/>
            <person name="Lam B."/>
            <person name="Sakano H."/>
            <person name="Wu T."/>
            <person name="Yu G."/>
            <person name="Miranda M."/>
            <person name="Quach H.L."/>
            <person name="Tripp M."/>
            <person name="Chang C.H."/>
            <person name="Lee J.M."/>
            <person name="Toriumi M.J."/>
            <person name="Chan M.M."/>
            <person name="Tang C.C."/>
            <person name="Onodera C.S."/>
            <person name="Deng J.M."/>
            <person name="Akiyama K."/>
            <person name="Ansari Y."/>
            <person name="Arakawa T."/>
            <person name="Banh J."/>
            <person name="Banno F."/>
            <person name="Bowser L."/>
            <person name="Brooks S.Y."/>
            <person name="Carninci P."/>
            <person name="Chao Q."/>
            <person name="Choy N."/>
            <person name="Enju A."/>
            <person name="Goldsmith A.D."/>
            <person name="Gurjal M."/>
            <person name="Hansen N.F."/>
            <person name="Hayashizaki Y."/>
            <person name="Johnson-Hopson C."/>
            <person name="Hsuan V.W."/>
            <person name="Iida K."/>
            <person name="Karnes M."/>
            <person name="Khan S."/>
            <person name="Koesema E."/>
            <person name="Ishida J."/>
            <person name="Jiang P.X."/>
            <person name="Jones T."/>
            <person name="Kawai J."/>
            <person name="Kamiya A."/>
            <person name="Meyers C."/>
            <person name="Nakajima M."/>
            <person name="Narusaka M."/>
            <person name="Seki M."/>
            <person name="Sakurai T."/>
            <person name="Satou M."/>
            <person name="Tamse R."/>
            <person name="Vaysberg M."/>
            <person name="Wallender E.K."/>
            <person name="Wong C."/>
            <person name="Yamamura Y."/>
            <person name="Yuan S."/>
            <person name="Shinozaki K."/>
            <person name="Davis R.W."/>
            <person name="Theologis A."/>
            <person name="Ecker J.R."/>
        </authorList>
    </citation>
    <scope>NUCLEOTIDE SEQUENCE [LARGE SCALE MRNA]</scope>
    <source>
        <strain>cv. Columbia</strain>
    </source>
</reference>
<reference key="4">
    <citation type="submission" date="2002-03" db="EMBL/GenBank/DDBJ databases">
        <title>Full-length cDNA from Arabidopsis thaliana.</title>
        <authorList>
            <person name="Brover V.V."/>
            <person name="Troukhan M.E."/>
            <person name="Alexandrov N.A."/>
            <person name="Lu Y.-P."/>
            <person name="Flavell R.B."/>
            <person name="Feldmann K.A."/>
        </authorList>
    </citation>
    <scope>NUCLEOTIDE SEQUENCE [LARGE SCALE MRNA]</scope>
</reference>
<reference key="5">
    <citation type="journal article" date="2005" name="Biochim. Biophys. Acta">
        <title>Biosynthesis of lysine in plants: evidence for a variant of the known bacterial pathways.</title>
        <authorList>
            <person name="Hudson A.O."/>
            <person name="Bless C."/>
            <person name="Macedo P."/>
            <person name="Chatterjee S.P."/>
            <person name="Singh B.K."/>
            <person name="Gilvarg C."/>
            <person name="Leustek T."/>
        </authorList>
    </citation>
    <scope>FUNCTION</scope>
</reference>
<reference key="6">
    <citation type="journal article" date="2012" name="Mol. Cell. Proteomics">
        <title>Comparative large-scale characterisation of plant vs. mammal proteins reveals similar and idiosyncratic N-alpha acetylation features.</title>
        <authorList>
            <person name="Bienvenut W.V."/>
            <person name="Sumpton D."/>
            <person name="Martinez A."/>
            <person name="Lilla S."/>
            <person name="Espagne C."/>
            <person name="Meinnel T."/>
            <person name="Giglione C."/>
        </authorList>
    </citation>
    <scope>ACETYLATION [LARGE SCALE ANALYSIS] AT ALA-50</scope>
    <scope>CLEAVAGE OF TRANSIT PEPTIDE [LARGE SCALE ANALYSIS] AFTER ALA-49</scope>
    <scope>IDENTIFICATION BY MASS SPECTROMETRY [LARGE SCALE ANALYSIS]</scope>
</reference>
<comment type="function">
    <text evidence="4">Specifically catalyzes the decarboxylation of meso-diaminopimelate (meso-DAP) to L-lysine.</text>
</comment>
<comment type="catalytic activity">
    <reaction>
        <text>meso-2,6-diaminopimelate + H(+) = L-lysine + CO2</text>
        <dbReference type="Rhea" id="RHEA:15101"/>
        <dbReference type="ChEBI" id="CHEBI:15378"/>
        <dbReference type="ChEBI" id="CHEBI:16526"/>
        <dbReference type="ChEBI" id="CHEBI:32551"/>
        <dbReference type="ChEBI" id="CHEBI:57791"/>
        <dbReference type="EC" id="4.1.1.20"/>
    </reaction>
</comment>
<comment type="cofactor">
    <cofactor evidence="1">
        <name>pyridoxal 5'-phosphate</name>
        <dbReference type="ChEBI" id="CHEBI:597326"/>
    </cofactor>
</comment>
<comment type="pathway">
    <text>Amino-acid biosynthesis; L-lysine biosynthesis via DAP pathway; L-lysine from DL-2,6-diaminopimelate: step 1/1.</text>
</comment>
<comment type="subunit">
    <text evidence="1">Homodimer.</text>
</comment>
<comment type="subcellular location">
    <subcellularLocation>
        <location evidence="5">Plastid</location>
        <location evidence="5">Chloroplast</location>
    </subcellularLocation>
</comment>
<comment type="similarity">
    <text evidence="5">Belongs to the Orn/Lys/Arg decarboxylase class-II family. LysA subfamily.</text>
</comment>
<comment type="sequence caution" evidence="5">
    <conflict type="erroneous initiation">
        <sequence resource="EMBL-CDS" id="BAB01044"/>
    </conflict>
</comment>
<name>DCDA1_ARATH</name>
<sequence length="484" mass="53557">MAAATQFLSQPSSLNPHQLKNQTSQRSRSIPVLSLKSTLKPLKRLSVKAAVVSQNSSKTVTKFDHCFKKSSDGFLYCEGTKVEDIMESVERRPFYLYSKPQITRNLEAYKEALEGVSSVIGYAIKANNNLKILEHLRSLGCGAVLVSGNELRLALRAGFDPTKCIFNGNGKSLEDLVLAAQEGVFVNVDSEFDLNNIVEASRISGKQVNVLLRINPDVDPQVHPYVATGNKNSKFGIRNEKLQWFLDQVKAHPKELKLVGAHCHLGSTITKVDIFRDAAVLMIEYIDEIRRQGFEVSYLNIGGGLGIDYYHAGAVLPTPMDLINTVRELVLSRDLNLIIEPGRSLIANTCCFVNHVTGVKTNGTKNFIVIDGSMAELIRPSLYDAYQHIELVSPPPAEAEVTKFDVVGPVCESADFLGKDRELPTPPQGAGLVVHDAGAYCMSMASTYNLKMRPPEYWVEEDGSITKIRHAETFDDHLRFFEGL</sequence>
<gene>
    <name type="primary">LYSA1</name>
    <name type="ordered locus">At3g14390</name>
    <name type="ORF">MLN21.17</name>
</gene>
<proteinExistence type="evidence at protein level"/>
<keyword id="KW-0002">3D-structure</keyword>
<keyword id="KW-0007">Acetylation</keyword>
<keyword id="KW-0028">Amino-acid biosynthesis</keyword>
<keyword id="KW-0150">Chloroplast</keyword>
<keyword id="KW-0210">Decarboxylase</keyword>
<keyword id="KW-0456">Lyase</keyword>
<keyword id="KW-0457">Lysine biosynthesis</keyword>
<keyword id="KW-0934">Plastid</keyword>
<keyword id="KW-0663">Pyridoxal phosphate</keyword>
<keyword id="KW-1185">Reference proteome</keyword>
<keyword id="KW-0809">Transit peptide</keyword>
<evidence type="ECO:0000250" key="1"/>
<evidence type="ECO:0000255" key="2"/>
<evidence type="ECO:0000256" key="3">
    <source>
        <dbReference type="SAM" id="MobiDB-lite"/>
    </source>
</evidence>
<evidence type="ECO:0000269" key="4">
    <source>
    </source>
</evidence>
<evidence type="ECO:0000305" key="5"/>
<evidence type="ECO:0007744" key="6">
    <source>
    </source>
</evidence>
<evidence type="ECO:0007829" key="7">
    <source>
        <dbReference type="PDB" id="6N2A"/>
    </source>
</evidence>